<organism>
    <name type="scientific">Macaca fascicularis</name>
    <name type="common">Crab-eating macaque</name>
    <name type="synonym">Cynomolgus monkey</name>
    <dbReference type="NCBI Taxonomy" id="9541"/>
    <lineage>
        <taxon>Eukaryota</taxon>
        <taxon>Metazoa</taxon>
        <taxon>Chordata</taxon>
        <taxon>Craniata</taxon>
        <taxon>Vertebrata</taxon>
        <taxon>Euteleostomi</taxon>
        <taxon>Mammalia</taxon>
        <taxon>Eutheria</taxon>
        <taxon>Euarchontoglires</taxon>
        <taxon>Primates</taxon>
        <taxon>Haplorrhini</taxon>
        <taxon>Catarrhini</taxon>
        <taxon>Cercopithecidae</taxon>
        <taxon>Cercopithecinae</taxon>
        <taxon>Macaca</taxon>
    </lineage>
</organism>
<reference key="1">
    <citation type="submission" date="2005-06" db="EMBL/GenBank/DDBJ databases">
        <title>DNA sequences of macaque genes expressed in brain or testis and its evolutionary implications.</title>
        <authorList>
            <consortium name="International consortium for macaque cDNA sequencing and analysis"/>
        </authorList>
    </citation>
    <scope>NUCLEOTIDE SEQUENCE [LARGE SCALE MRNA]</scope>
    <source>
        <tissue>Brain cortex</tissue>
    </source>
</reference>
<evidence type="ECO:0000250" key="1">
    <source>
        <dbReference type="UniProtKB" id="O18840"/>
    </source>
</evidence>
<evidence type="ECO:0000250" key="2">
    <source>
        <dbReference type="UniProtKB" id="P60709"/>
    </source>
</evidence>
<evidence type="ECO:0000250" key="3">
    <source>
        <dbReference type="UniProtKB" id="P60710"/>
    </source>
</evidence>
<evidence type="ECO:0000250" key="4">
    <source>
        <dbReference type="UniProtKB" id="P68137"/>
    </source>
</evidence>
<evidence type="ECO:0000250" key="5">
    <source>
        <dbReference type="UniProtKB" id="Q6QAQ1"/>
    </source>
</evidence>
<evidence type="ECO:0000305" key="6"/>
<dbReference type="EC" id="3.6.4.-" evidence="4"/>
<dbReference type="EMBL" id="AB169683">
    <property type="protein sequence ID" value="BAE01764.1"/>
    <property type="molecule type" value="mRNA"/>
</dbReference>
<dbReference type="RefSeq" id="NP_001271954.1">
    <property type="nucleotide sequence ID" value="NM_001285025.1"/>
</dbReference>
<dbReference type="RefSeq" id="XP_045243797.1">
    <property type="nucleotide sequence ID" value="XM_045387862.2"/>
</dbReference>
<dbReference type="SMR" id="Q4R561"/>
<dbReference type="STRING" id="9541.ENSMFAP00000017983"/>
<dbReference type="GeneID" id="102139853"/>
<dbReference type="VEuPathDB" id="HostDB:ENSMFAG00000031981"/>
<dbReference type="eggNOG" id="KOG0676">
    <property type="taxonomic scope" value="Eukaryota"/>
</dbReference>
<dbReference type="Proteomes" id="UP000233100">
    <property type="component" value="Chromosome 3"/>
</dbReference>
<dbReference type="GO" id="GO:0015629">
    <property type="term" value="C:actin cytoskeleton"/>
    <property type="evidence" value="ECO:0000250"/>
    <property type="project" value="UniProtKB"/>
</dbReference>
<dbReference type="GO" id="GO:0005856">
    <property type="term" value="C:cytoskeleton"/>
    <property type="evidence" value="ECO:0000250"/>
    <property type="project" value="AgBase"/>
</dbReference>
<dbReference type="GO" id="GO:0097433">
    <property type="term" value="C:dense body"/>
    <property type="evidence" value="ECO:0000250"/>
    <property type="project" value="AgBase"/>
</dbReference>
<dbReference type="GO" id="GO:0005925">
    <property type="term" value="C:focal adhesion"/>
    <property type="evidence" value="ECO:0000250"/>
    <property type="project" value="AgBase"/>
</dbReference>
<dbReference type="GO" id="GO:0005634">
    <property type="term" value="C:nucleus"/>
    <property type="evidence" value="ECO:0000250"/>
    <property type="project" value="UniProtKB"/>
</dbReference>
<dbReference type="GO" id="GO:0005886">
    <property type="term" value="C:plasma membrane"/>
    <property type="evidence" value="ECO:0000250"/>
    <property type="project" value="AgBase"/>
</dbReference>
<dbReference type="GO" id="GO:0032991">
    <property type="term" value="C:protein-containing complex"/>
    <property type="evidence" value="ECO:0000250"/>
    <property type="project" value="UniProtKB"/>
</dbReference>
<dbReference type="GO" id="GO:0005524">
    <property type="term" value="F:ATP binding"/>
    <property type="evidence" value="ECO:0007669"/>
    <property type="project" value="UniProtKB-KW"/>
</dbReference>
<dbReference type="GO" id="GO:0016787">
    <property type="term" value="F:hydrolase activity"/>
    <property type="evidence" value="ECO:0007669"/>
    <property type="project" value="UniProtKB-KW"/>
</dbReference>
<dbReference type="CDD" id="cd10224">
    <property type="entry name" value="ASKHA_NBD_actin"/>
    <property type="match status" value="1"/>
</dbReference>
<dbReference type="FunFam" id="3.30.420.40:FF:000131">
    <property type="entry name" value="Actin, alpha skeletal muscle"/>
    <property type="match status" value="1"/>
</dbReference>
<dbReference type="FunFam" id="3.30.420.40:FF:000291">
    <property type="entry name" value="Actin, alpha skeletal muscle"/>
    <property type="match status" value="1"/>
</dbReference>
<dbReference type="FunFam" id="3.90.640.10:FF:000047">
    <property type="entry name" value="Actin, alpha skeletal muscle"/>
    <property type="match status" value="1"/>
</dbReference>
<dbReference type="FunFam" id="3.30.420.40:FF:000058">
    <property type="entry name" value="Putative actin-related protein 5"/>
    <property type="match status" value="1"/>
</dbReference>
<dbReference type="Gene3D" id="3.30.420.40">
    <property type="match status" value="2"/>
</dbReference>
<dbReference type="Gene3D" id="3.90.640.10">
    <property type="entry name" value="Actin, Chain A, domain 4"/>
    <property type="match status" value="1"/>
</dbReference>
<dbReference type="InterPro" id="IPR004000">
    <property type="entry name" value="Actin"/>
</dbReference>
<dbReference type="InterPro" id="IPR020902">
    <property type="entry name" value="Actin/actin-like_CS"/>
</dbReference>
<dbReference type="InterPro" id="IPR004001">
    <property type="entry name" value="Actin_CS"/>
</dbReference>
<dbReference type="InterPro" id="IPR043129">
    <property type="entry name" value="ATPase_NBD"/>
</dbReference>
<dbReference type="PANTHER" id="PTHR11937">
    <property type="entry name" value="ACTIN"/>
    <property type="match status" value="1"/>
</dbReference>
<dbReference type="Pfam" id="PF00022">
    <property type="entry name" value="Actin"/>
    <property type="match status" value="1"/>
</dbReference>
<dbReference type="PRINTS" id="PR00190">
    <property type="entry name" value="ACTIN"/>
</dbReference>
<dbReference type="SMART" id="SM00268">
    <property type="entry name" value="ACTIN"/>
    <property type="match status" value="1"/>
</dbReference>
<dbReference type="SUPFAM" id="SSF53067">
    <property type="entry name" value="Actin-like ATPase domain"/>
    <property type="match status" value="2"/>
</dbReference>
<dbReference type="PROSITE" id="PS00406">
    <property type="entry name" value="ACTINS_1"/>
    <property type="match status" value="1"/>
</dbReference>
<dbReference type="PROSITE" id="PS00432">
    <property type="entry name" value="ACTINS_2"/>
    <property type="match status" value="1"/>
</dbReference>
<dbReference type="PROSITE" id="PS01132">
    <property type="entry name" value="ACTINS_ACT_LIKE"/>
    <property type="match status" value="1"/>
</dbReference>
<gene>
    <name type="primary">ACTB</name>
    <name type="ORF">QccE-17788</name>
</gene>
<sequence length="375" mass="41737">MDDDIAALVVDNGSGMCKAGFAGDDAPRAVFPSIVGRPRHQGVMVGMGQKDSYVGDEAQSKRGILTLKYPIEHGIVTNWDDMEKIWHHTFYNELRVAPEEHPVLLTEAPLNPKANREKMTQIMFETFNTPAMYVAIQAVLSLYASGRTTGIVMDSGDGVTHTVPIYEGYALPHAILRLDLAGRDLTDYLMKILTERGYSFTTTAEREIVRDIKEKLCYVALDFEQEMATAASSSSLEKSYELPDGQVITIGNERFRCPEALFQPSFLGMESCGIHETTFNSIMKCDVDIRKDLYANTVLSGGTTMYPGIADRMQKEITALAPSTMKIKIIAPPERKYSVWIGGSILASLSTFQQMWISKQEYDESGPSIVHRKCF</sequence>
<comment type="function">
    <text evidence="2 5">Actin is a highly conserved protein that polymerizes to produce filaments that form cross-linked networks in the cytoplasm of cells (By similarity). Actin exists in both monomeric (G-actin) and polymeric (F-actin) forms, both forms playing key functions, such as cell motility and contraction (By similarity). In addition to their role in the cytoplasmic cytoskeleton, G- and F-actin also localize in the nucleus, and regulate gene transcription and motility and repair of damaged DNA (By similarity). Plays a role in the assembly of the gamma-tubulin ring complex (gTuRC), which regulates the minus-end nucleation of alpha-beta tubulin heterodimers that grow into microtubule protafilaments (By similarity). Part of the ACTR1A/ACTB filament around which the dynactin complex is built (By similarity). The dynactin multiprotein complex activates the molecular motor dynein for ultra-processive transport along microtubules (By similarity).</text>
</comment>
<comment type="catalytic activity">
    <reaction evidence="4">
        <text>ATP + H2O = ADP + phosphate + H(+)</text>
        <dbReference type="Rhea" id="RHEA:13065"/>
        <dbReference type="ChEBI" id="CHEBI:15377"/>
        <dbReference type="ChEBI" id="CHEBI:15378"/>
        <dbReference type="ChEBI" id="CHEBI:30616"/>
        <dbReference type="ChEBI" id="CHEBI:43474"/>
        <dbReference type="ChEBI" id="CHEBI:456216"/>
    </reaction>
</comment>
<comment type="subunit">
    <text evidence="1 2 3 5">Polymerization of globular actin (G-actin) leads to a structural filament (F-actin) in the form of a two-stranded helix (By similarity). Each actin can bind to 4 others (By similarity). Identified in a IGF2BP1-dependent mRNP granule complex containing untranslated mRNAs (By similarity). Component of the BAF complex, which includes at least actin (ACTB), ARID1A, ARID1B/BAF250, SMARCA2, SMARCA4/BRG1, ACTL6A/BAF53, ACTL6B/BAF53B, SMARCE1/BAF57 SMARCC1/BAF155, SMARCC2/BAF170, SMARCB1/SNF5/INI1, and one or more of SMARCD1/BAF60A, SMARCD2/BAF60B, or SMARCD3/BAF60C (By similarity). In muscle cells, the BAF complex also contains DPF3 (By similarity). Found in a complex with XPO6, Ran, ACTB and PFN1 (By similarity). Interacts with PFN1 (By similarity). Interacts with XPO6 and EMD (By similarity). Interacts with ERBB2 (By similarity). Interacts with GCSAM (By similarity). Interacts with TBC1D21 (By similarity). Interacts with CPNE1 (via VWFA domain) and CPNE4 (via VWFA domain) (By similarity). Interacts with DHX9 (via C-terminus); this interaction is direct and mediates the attachment to nuclear ribonucleoprotein complexes (By similarity). Interacts with FAM107A (By similarity). Associates with the gamma-tubulin ring complex (gTuRC) consisting of TUBGCP2, TUBGCP3, TUBGCP4, TUBGCP5 and TUBGCP6 and gamma-tubulin TUBG1 or TUBG2; within the complex, interacts with TUBGCP3 and TUBGCP6 to form a luminal bridge with MZT1 that stabilizes the initial structure during complex assembly (By similarity). Part of the ACTR1A/ACTB filament around which the dynactin complex is built (By similarity). The filament contains 8 copies of ACTR1A and 1 ACTB (By similarity). Interacts with TPRN which forms ring-like structures in the stereocilium taper region; the interaction may stabilize stereocilia in inner ear hair cells (By similarity). Interacts with AMOTL2 (via N-terminus), the interaction facilitates binding of cell junction complexes to actin fibers in endothelial cells (By similarity).</text>
</comment>
<comment type="subcellular location">
    <subcellularLocation>
        <location evidence="2">Cytoplasm</location>
        <location evidence="2">Cytoskeleton</location>
    </subcellularLocation>
    <subcellularLocation>
        <location evidence="2">Nucleus</location>
    </subcellularLocation>
    <text evidence="2">Localized in cytoplasmic mRNP granules containing untranslated mRNAs.</text>
</comment>
<comment type="PTM">
    <molecule>Actin, cytoplasmic 1</molecule>
    <text evidence="2">N-terminal cleavage of acetylated methionine of immature cytoplasmic actin by ACTMAP.</text>
</comment>
<comment type="PTM">
    <text evidence="2">ISGylated.</text>
</comment>
<comment type="PTM">
    <text evidence="3">Oxidation of Met-44 and Met-47 by MICALs (MICAL1, MICAL2 or MICAL3) to form methionine sulfoxide promotes actin filament depolymerization. MICAL1 and MICAL2 produce the (R)-S-oxide form. The (R)-S-oxide form is reverted by MSRB1 and MSRB2, which promote actin repolymerization.</text>
</comment>
<comment type="PTM">
    <text evidence="2">Monomethylation at Lys-84 (K84me1) regulates actin-myosin interaction and actomyosin-dependent processes. Demethylation by ALKBH4 is required for maintaining actomyosin dynamics supporting normal cleavage furrow ingression during cytokinesis and cell migration.</text>
</comment>
<comment type="PTM">
    <molecule>Actin, cytoplasmic 1, N-terminally processed</molecule>
    <text evidence="2">N-terminal acetylation by NAA80 affects actin filament depolymerization and elongation, including elongation driven by formins. In contrast, filament nucleation by the Arp2/3 complex is not affected.</text>
</comment>
<comment type="PTM">
    <text evidence="2 3">Methylated at His-73 by SETD3 (By similarity). Methylation at His-73 is required for smooth muscle contraction of the laboring uterus during delivery (By similarity).</text>
</comment>
<comment type="miscellaneous">
    <text evidence="2">In vertebrates 3 main groups of actin isoforms, alpha, beta and gamma have been identified. The alpha actins are found in muscle tissues and are a major constituent of the contractile apparatus. The beta and gamma actins coexist in most cell types as components of the cytoskeleton and as mediators of internal cell motility.</text>
</comment>
<comment type="similarity">
    <text evidence="6">Belongs to the actin family.</text>
</comment>
<proteinExistence type="evidence at transcript level"/>
<protein>
    <recommendedName>
        <fullName>Actin, cytoplasmic 1</fullName>
        <ecNumber evidence="4">3.6.4.-</ecNumber>
    </recommendedName>
    <alternativeName>
        <fullName>Beta-actin</fullName>
    </alternativeName>
    <component>
        <recommendedName>
            <fullName>Actin, cytoplasmic 1, N-terminally processed</fullName>
        </recommendedName>
    </component>
</protein>
<keyword id="KW-0007">Acetylation</keyword>
<keyword id="KW-0067">ATP-binding</keyword>
<keyword id="KW-0963">Cytoplasm</keyword>
<keyword id="KW-0206">Cytoskeleton</keyword>
<keyword id="KW-0378">Hydrolase</keyword>
<keyword id="KW-0488">Methylation</keyword>
<keyword id="KW-0547">Nucleotide-binding</keyword>
<keyword id="KW-0539">Nucleus</keyword>
<keyword id="KW-0558">Oxidation</keyword>
<keyword id="KW-1185">Reference proteome</keyword>
<keyword id="KW-0832">Ubl conjugation</keyword>
<name>ACTB_MACFA</name>
<accession>Q4R561</accession>
<feature type="chain" id="PRO_0000291867" description="Actin, cytoplasmic 1">
    <location>
        <begin position="1"/>
        <end position="375"/>
    </location>
</feature>
<feature type="initiator methionine" description="Removed; alternate" evidence="2">
    <location>
        <position position="1"/>
    </location>
</feature>
<feature type="chain" id="PRO_0000367074" description="Actin, cytoplasmic 1, N-terminally processed">
    <location>
        <begin position="2"/>
        <end position="375"/>
    </location>
</feature>
<feature type="modified residue" description="N-acetylmethionine" evidence="2">
    <location>
        <position position="1"/>
    </location>
</feature>
<feature type="modified residue" description="N-acetylaspartate; in Actin, cytoplasmic 1, N-terminally processed" evidence="2">
    <location>
        <position position="2"/>
    </location>
</feature>
<feature type="modified residue" description="Methionine (R)-sulfoxide" evidence="3">
    <location>
        <position position="44"/>
    </location>
</feature>
<feature type="modified residue" description="Methionine (R)-sulfoxide" evidence="3">
    <location>
        <position position="47"/>
    </location>
</feature>
<feature type="modified residue" description="Tele-methylhistidine" evidence="3">
    <location>
        <position position="73"/>
    </location>
</feature>
<feature type="modified residue" description="N6-methyllysine" evidence="2">
    <location>
        <position position="84"/>
    </location>
</feature>